<comment type="function">
    <text evidence="1">Required for insertion of 4Fe-4S clusters for at least IspG.</text>
</comment>
<comment type="cofactor">
    <cofactor evidence="1">
        <name>iron-sulfur cluster</name>
        <dbReference type="ChEBI" id="CHEBI:30408"/>
    </cofactor>
    <text evidence="1">Binds 1 iron-sulfur cluster per subunit.</text>
</comment>
<comment type="subunit">
    <text evidence="1">Homodimer.</text>
</comment>
<comment type="similarity">
    <text evidence="1">Belongs to the HesB/IscA family.</text>
</comment>
<name>ERPA_PSE14</name>
<reference key="1">
    <citation type="journal article" date="2005" name="J. Bacteriol.">
        <title>Whole-genome sequence analysis of Pseudomonas syringae pv. phaseolicola 1448A reveals divergence among pathovars in genes involved in virulence and transposition.</title>
        <authorList>
            <person name="Joardar V."/>
            <person name="Lindeberg M."/>
            <person name="Jackson R.W."/>
            <person name="Selengut J."/>
            <person name="Dodson R."/>
            <person name="Brinkac L.M."/>
            <person name="Daugherty S.C."/>
            <person name="DeBoy R.T."/>
            <person name="Durkin A.S."/>
            <person name="Gwinn Giglio M."/>
            <person name="Madupu R."/>
            <person name="Nelson W.C."/>
            <person name="Rosovitz M.J."/>
            <person name="Sullivan S.A."/>
            <person name="Crabtree J."/>
            <person name="Creasy T."/>
            <person name="Davidsen T.M."/>
            <person name="Haft D.H."/>
            <person name="Zafar N."/>
            <person name="Zhou L."/>
            <person name="Halpin R."/>
            <person name="Holley T."/>
            <person name="Khouri H.M."/>
            <person name="Feldblyum T.V."/>
            <person name="White O."/>
            <person name="Fraser C.M."/>
            <person name="Chatterjee A.K."/>
            <person name="Cartinhour S."/>
            <person name="Schneider D."/>
            <person name="Mansfield J.W."/>
            <person name="Collmer A."/>
            <person name="Buell R."/>
        </authorList>
    </citation>
    <scope>NUCLEOTIDE SEQUENCE [LARGE SCALE GENOMIC DNA]</scope>
    <source>
        <strain>1448A / Race 6</strain>
    </source>
</reference>
<dbReference type="EMBL" id="CP000058">
    <property type="protein sequence ID" value="AAZ37604.1"/>
    <property type="molecule type" value="Genomic_DNA"/>
</dbReference>
<dbReference type="RefSeq" id="WP_002551953.1">
    <property type="nucleotide sequence ID" value="NC_005773.3"/>
</dbReference>
<dbReference type="SMR" id="Q48NN6"/>
<dbReference type="GeneID" id="96221059"/>
<dbReference type="KEGG" id="psp:PSPPH_0685"/>
<dbReference type="eggNOG" id="COG0316">
    <property type="taxonomic scope" value="Bacteria"/>
</dbReference>
<dbReference type="HOGENOM" id="CLU_069054_5_3_6"/>
<dbReference type="Proteomes" id="UP000000551">
    <property type="component" value="Chromosome"/>
</dbReference>
<dbReference type="GO" id="GO:0005829">
    <property type="term" value="C:cytosol"/>
    <property type="evidence" value="ECO:0007669"/>
    <property type="project" value="TreeGrafter"/>
</dbReference>
<dbReference type="GO" id="GO:0051537">
    <property type="term" value="F:2 iron, 2 sulfur cluster binding"/>
    <property type="evidence" value="ECO:0007669"/>
    <property type="project" value="UniProtKB-ARBA"/>
</dbReference>
<dbReference type="GO" id="GO:0051539">
    <property type="term" value="F:4 iron, 4 sulfur cluster binding"/>
    <property type="evidence" value="ECO:0007669"/>
    <property type="project" value="TreeGrafter"/>
</dbReference>
<dbReference type="GO" id="GO:0005506">
    <property type="term" value="F:iron ion binding"/>
    <property type="evidence" value="ECO:0007669"/>
    <property type="project" value="UniProtKB-UniRule"/>
</dbReference>
<dbReference type="GO" id="GO:0016226">
    <property type="term" value="P:iron-sulfur cluster assembly"/>
    <property type="evidence" value="ECO:0007669"/>
    <property type="project" value="UniProtKB-UniRule"/>
</dbReference>
<dbReference type="FunFam" id="2.60.300.12:FF:000002">
    <property type="entry name" value="Iron-sulfur cluster insertion protein ErpA"/>
    <property type="match status" value="1"/>
</dbReference>
<dbReference type="Gene3D" id="2.60.300.12">
    <property type="entry name" value="HesB-like domain"/>
    <property type="match status" value="1"/>
</dbReference>
<dbReference type="HAMAP" id="MF_01380">
    <property type="entry name" value="Fe_S_insert_ErpA"/>
    <property type="match status" value="1"/>
</dbReference>
<dbReference type="InterPro" id="IPR000361">
    <property type="entry name" value="FeS_biogenesis"/>
</dbReference>
<dbReference type="InterPro" id="IPR016092">
    <property type="entry name" value="FeS_cluster_insertion"/>
</dbReference>
<dbReference type="InterPro" id="IPR017870">
    <property type="entry name" value="FeS_cluster_insertion_CS"/>
</dbReference>
<dbReference type="InterPro" id="IPR023063">
    <property type="entry name" value="FeS_cluster_insertion_RrpA"/>
</dbReference>
<dbReference type="InterPro" id="IPR035903">
    <property type="entry name" value="HesB-like_dom_sf"/>
</dbReference>
<dbReference type="NCBIfam" id="TIGR00049">
    <property type="entry name" value="iron-sulfur cluster assembly accessory protein"/>
    <property type="match status" value="1"/>
</dbReference>
<dbReference type="NCBIfam" id="NF010147">
    <property type="entry name" value="PRK13623.1"/>
    <property type="match status" value="1"/>
</dbReference>
<dbReference type="PANTHER" id="PTHR43011">
    <property type="entry name" value="IRON-SULFUR CLUSTER ASSEMBLY 2 HOMOLOG, MITOCHONDRIAL"/>
    <property type="match status" value="1"/>
</dbReference>
<dbReference type="PANTHER" id="PTHR43011:SF1">
    <property type="entry name" value="IRON-SULFUR CLUSTER ASSEMBLY 2 HOMOLOG, MITOCHONDRIAL"/>
    <property type="match status" value="1"/>
</dbReference>
<dbReference type="Pfam" id="PF01521">
    <property type="entry name" value="Fe-S_biosyn"/>
    <property type="match status" value="1"/>
</dbReference>
<dbReference type="SUPFAM" id="SSF89360">
    <property type="entry name" value="HesB-like domain"/>
    <property type="match status" value="1"/>
</dbReference>
<dbReference type="PROSITE" id="PS01152">
    <property type="entry name" value="HESB"/>
    <property type="match status" value="1"/>
</dbReference>
<gene>
    <name evidence="1" type="primary">erpA</name>
    <name type="ordered locus">PSPPH_0685</name>
</gene>
<feature type="chain" id="PRO_0000311530" description="Iron-sulfur cluster insertion protein ErpA">
    <location>
        <begin position="1"/>
        <end position="116"/>
    </location>
</feature>
<feature type="binding site" evidence="1">
    <location>
        <position position="44"/>
    </location>
    <ligand>
        <name>iron-sulfur cluster</name>
        <dbReference type="ChEBI" id="CHEBI:30408"/>
    </ligand>
</feature>
<feature type="binding site" evidence="1">
    <location>
        <position position="108"/>
    </location>
    <ligand>
        <name>iron-sulfur cluster</name>
        <dbReference type="ChEBI" id="CHEBI:30408"/>
    </ligand>
</feature>
<feature type="binding site" evidence="1">
    <location>
        <position position="110"/>
    </location>
    <ligand>
        <name>iron-sulfur cluster</name>
        <dbReference type="ChEBI" id="CHEBI:30408"/>
    </ligand>
</feature>
<proteinExistence type="inferred from homology"/>
<accession>Q48NN6</accession>
<protein>
    <recommendedName>
        <fullName evidence="1">Iron-sulfur cluster insertion protein ErpA</fullName>
    </recommendedName>
</protein>
<evidence type="ECO:0000255" key="1">
    <source>
        <dbReference type="HAMAP-Rule" id="MF_01380"/>
    </source>
</evidence>
<keyword id="KW-0408">Iron</keyword>
<keyword id="KW-0411">Iron-sulfur</keyword>
<keyword id="KW-0479">Metal-binding</keyword>
<organism>
    <name type="scientific">Pseudomonas savastanoi pv. phaseolicola (strain 1448A / Race 6)</name>
    <name type="common">Pseudomonas syringae pv. phaseolicola (strain 1448A / Race 6)</name>
    <dbReference type="NCBI Taxonomy" id="264730"/>
    <lineage>
        <taxon>Bacteria</taxon>
        <taxon>Pseudomonadati</taxon>
        <taxon>Pseudomonadota</taxon>
        <taxon>Gammaproteobacteria</taxon>
        <taxon>Pseudomonadales</taxon>
        <taxon>Pseudomonadaceae</taxon>
        <taxon>Pseudomonas</taxon>
    </lineage>
</organism>
<sequence length="116" mass="12519">MSVESFTPTALEFTPNAAHKVKTLVDEEGNDRLKLRVFVTGGGCSGFQYGFTFDEDVADDDTIVEREGVSLVVDPMSFQYLAGAEVDYQEGLEGSRFVIKNPNASTTCGCGSSFSI</sequence>